<gene>
    <name evidence="1" type="primary">fgd</name>
    <name type="ordered locus">Intca_2335</name>
</gene>
<keyword id="KW-0119">Carbohydrate metabolism</keyword>
<keyword id="KW-0560">Oxidoreductase</keyword>
<keyword id="KW-1185">Reference proteome</keyword>
<name>FGD_INTC7</name>
<proteinExistence type="inferred from homology"/>
<comment type="function">
    <text evidence="1">Catalyzes the coenzyme F420-dependent oxidation of glucose 6-phosphate (G6P) to 6-phosphogluconolactone.</text>
</comment>
<comment type="catalytic activity">
    <reaction evidence="1">
        <text>oxidized coenzyme F420-(gamma-L-Glu)(n) + D-glucose 6-phosphate + H(+) = 6-phospho-D-glucono-1,5-lactone + reduced coenzyme F420-(gamma-L-Glu)(n)</text>
        <dbReference type="Rhea" id="RHEA:27294"/>
        <dbReference type="Rhea" id="RHEA-COMP:12939"/>
        <dbReference type="Rhea" id="RHEA-COMP:14378"/>
        <dbReference type="ChEBI" id="CHEBI:15378"/>
        <dbReference type="ChEBI" id="CHEBI:57955"/>
        <dbReference type="ChEBI" id="CHEBI:61548"/>
        <dbReference type="ChEBI" id="CHEBI:133980"/>
        <dbReference type="ChEBI" id="CHEBI:139511"/>
        <dbReference type="EC" id="1.1.98.2"/>
    </reaction>
</comment>
<comment type="subunit">
    <text evidence="1">Homodimer.</text>
</comment>
<comment type="similarity">
    <text evidence="1">Belongs to the F420-dependent glucose-6-phosphate dehydrogenase family.</text>
</comment>
<accession>E6SFR5</accession>
<reference key="1">
    <citation type="journal article" date="2010" name="Stand. Genomic Sci.">
        <title>Complete genome sequence of Intrasporangium calvum type strain (7 KIP).</title>
        <authorList>
            <person name="Del Rio T.G."/>
            <person name="Chertkov O."/>
            <person name="Yasawong M."/>
            <person name="Lucas S."/>
            <person name="Deshpande S."/>
            <person name="Cheng J.F."/>
            <person name="Detter C."/>
            <person name="Tapia R."/>
            <person name="Han C."/>
            <person name="Goodwin L."/>
            <person name="Pitluck S."/>
            <person name="Liolios K."/>
            <person name="Ivanova N."/>
            <person name="Mavromatis K."/>
            <person name="Pati A."/>
            <person name="Chen A."/>
            <person name="Palaniappan K."/>
            <person name="Land M."/>
            <person name="Hauser L."/>
            <person name="Chang Y.J."/>
            <person name="Jeffries C.D."/>
            <person name="Rohde M."/>
            <person name="Pukall R."/>
            <person name="Sikorski J."/>
            <person name="Goker M."/>
            <person name="Woyke T."/>
            <person name="Bristow J."/>
            <person name="Eisen J.A."/>
            <person name="Markowitz V."/>
            <person name="Hugenholtz P."/>
            <person name="Kyrpides N.C."/>
            <person name="Klenk H.P."/>
            <person name="Lapidus A."/>
        </authorList>
    </citation>
    <scope>NUCLEOTIDE SEQUENCE [LARGE SCALE GENOMIC DNA]</scope>
    <source>
        <strain>ATCC 23552 / DSM 43043 / JCM 3097 / NBRC 12989 / NCIMB 10167 / NRRL B-3866 / 7 KIP</strain>
    </source>
</reference>
<feature type="chain" id="PRO_0000413587" description="F420-dependent glucose-6-phosphate dehydrogenase">
    <location>
        <begin position="1"/>
        <end position="334"/>
    </location>
</feature>
<feature type="active site" description="Proton donor" evidence="1">
    <location>
        <position position="38"/>
    </location>
</feature>
<feature type="active site" description="Proton acceptor" evidence="1">
    <location>
        <position position="107"/>
    </location>
</feature>
<feature type="binding site" evidence="1">
    <location>
        <position position="37"/>
    </location>
    <ligand>
        <name>coenzyme F420-(gamma-Glu)n</name>
        <dbReference type="ChEBI" id="CHEBI:133980"/>
    </ligand>
</feature>
<feature type="binding site" evidence="1">
    <location>
        <position position="74"/>
    </location>
    <ligand>
        <name>coenzyme F420-(gamma-Glu)n</name>
        <dbReference type="ChEBI" id="CHEBI:133980"/>
    </ligand>
</feature>
<feature type="binding site" evidence="1">
    <location>
        <begin position="105"/>
        <end position="106"/>
    </location>
    <ligand>
        <name>coenzyme F420-(gamma-Glu)n</name>
        <dbReference type="ChEBI" id="CHEBI:133980"/>
    </ligand>
</feature>
<feature type="binding site" evidence="1">
    <location>
        <position position="110"/>
    </location>
    <ligand>
        <name>coenzyme F420-(gamma-Glu)n</name>
        <dbReference type="ChEBI" id="CHEBI:133980"/>
    </ligand>
</feature>
<feature type="binding site" evidence="1">
    <location>
        <begin position="176"/>
        <end position="177"/>
    </location>
    <ligand>
        <name>coenzyme F420-(gamma-Glu)n</name>
        <dbReference type="ChEBI" id="CHEBI:133980"/>
    </ligand>
</feature>
<feature type="binding site" evidence="1">
    <location>
        <begin position="179"/>
        <end position="180"/>
    </location>
    <ligand>
        <name>coenzyme F420-(gamma-Glu)n</name>
        <dbReference type="ChEBI" id="CHEBI:133980"/>
    </ligand>
</feature>
<feature type="binding site" evidence="1">
    <location>
        <position position="194"/>
    </location>
    <ligand>
        <name>substrate</name>
    </ligand>
</feature>
<feature type="binding site" evidence="1">
    <location>
        <position position="197"/>
    </location>
    <ligand>
        <name>substrate</name>
    </ligand>
</feature>
<feature type="binding site" evidence="1">
    <location>
        <position position="258"/>
    </location>
    <ligand>
        <name>substrate</name>
    </ligand>
</feature>
<feature type="binding site" evidence="1">
    <location>
        <position position="282"/>
    </location>
    <ligand>
        <name>substrate</name>
    </ligand>
</feature>
<evidence type="ECO:0000255" key="1">
    <source>
        <dbReference type="HAMAP-Rule" id="MF_02123"/>
    </source>
</evidence>
<dbReference type="EC" id="1.1.98.2" evidence="1"/>
<dbReference type="EMBL" id="CP002343">
    <property type="protein sequence ID" value="ADU48844.1"/>
    <property type="molecule type" value="Genomic_DNA"/>
</dbReference>
<dbReference type="RefSeq" id="WP_013493158.1">
    <property type="nucleotide sequence ID" value="NC_014830.1"/>
</dbReference>
<dbReference type="SMR" id="E6SFR5"/>
<dbReference type="STRING" id="710696.Intca_2335"/>
<dbReference type="KEGG" id="ica:Intca_2335"/>
<dbReference type="eggNOG" id="COG2141">
    <property type="taxonomic scope" value="Bacteria"/>
</dbReference>
<dbReference type="HOGENOM" id="CLU_027853_4_0_11"/>
<dbReference type="OrthoDB" id="180193at2"/>
<dbReference type="Proteomes" id="UP000008914">
    <property type="component" value="Chromosome"/>
</dbReference>
<dbReference type="GO" id="GO:0070967">
    <property type="term" value="F:coenzyme F420 binding"/>
    <property type="evidence" value="ECO:0007669"/>
    <property type="project" value="UniProtKB-UniRule"/>
</dbReference>
<dbReference type="GO" id="GO:0052749">
    <property type="term" value="F:glucose-6-phosphate dehydrogenase (coenzyme F420) activity"/>
    <property type="evidence" value="ECO:0007669"/>
    <property type="project" value="UniProtKB-EC"/>
</dbReference>
<dbReference type="GO" id="GO:0016705">
    <property type="term" value="F:oxidoreductase activity, acting on paired donors, with incorporation or reduction of molecular oxygen"/>
    <property type="evidence" value="ECO:0007669"/>
    <property type="project" value="InterPro"/>
</dbReference>
<dbReference type="GO" id="GO:0005975">
    <property type="term" value="P:carbohydrate metabolic process"/>
    <property type="evidence" value="ECO:0007669"/>
    <property type="project" value="UniProtKB-UniRule"/>
</dbReference>
<dbReference type="CDD" id="cd01097">
    <property type="entry name" value="Tetrahydromethanopterin_reductase"/>
    <property type="match status" value="1"/>
</dbReference>
<dbReference type="Gene3D" id="3.20.20.30">
    <property type="entry name" value="Luciferase-like domain"/>
    <property type="match status" value="1"/>
</dbReference>
<dbReference type="HAMAP" id="MF_02123">
    <property type="entry name" value="F420_G6P_DH"/>
    <property type="match status" value="1"/>
</dbReference>
<dbReference type="InterPro" id="IPR019944">
    <property type="entry name" value="F420-dep_G6P_DH"/>
</dbReference>
<dbReference type="InterPro" id="IPR050564">
    <property type="entry name" value="F420-G6PD/mer"/>
</dbReference>
<dbReference type="InterPro" id="IPR019945">
    <property type="entry name" value="F420_G6P_DH-rel"/>
</dbReference>
<dbReference type="InterPro" id="IPR011251">
    <property type="entry name" value="Luciferase-like_dom"/>
</dbReference>
<dbReference type="InterPro" id="IPR036661">
    <property type="entry name" value="Luciferase-like_sf"/>
</dbReference>
<dbReference type="NCBIfam" id="TIGR03554">
    <property type="entry name" value="F420_G6P_DH"/>
    <property type="match status" value="1"/>
</dbReference>
<dbReference type="NCBIfam" id="TIGR03557">
    <property type="entry name" value="F420_G6P_family"/>
    <property type="match status" value="1"/>
</dbReference>
<dbReference type="PANTHER" id="PTHR43244">
    <property type="match status" value="1"/>
</dbReference>
<dbReference type="PANTHER" id="PTHR43244:SF1">
    <property type="entry name" value="5,10-METHYLENETETRAHYDROMETHANOPTERIN REDUCTASE"/>
    <property type="match status" value="1"/>
</dbReference>
<dbReference type="Pfam" id="PF00296">
    <property type="entry name" value="Bac_luciferase"/>
    <property type="match status" value="1"/>
</dbReference>
<dbReference type="SUPFAM" id="SSF51679">
    <property type="entry name" value="Bacterial luciferase-like"/>
    <property type="match status" value="1"/>
</dbReference>
<organism>
    <name type="scientific">Intrasporangium calvum (strain ATCC 23552 / DSM 43043 / JCM 3097 / NBRC 12989 / NCIMB 10167 / NRRL B-3866 / 7 KIP)</name>
    <dbReference type="NCBI Taxonomy" id="710696"/>
    <lineage>
        <taxon>Bacteria</taxon>
        <taxon>Bacillati</taxon>
        <taxon>Actinomycetota</taxon>
        <taxon>Actinomycetes</taxon>
        <taxon>Micrococcales</taxon>
        <taxon>Intrasporangiaceae</taxon>
        <taxon>Intrasporangium</taxon>
    </lineage>
</organism>
<sequence length="334" mass="37084">MLKVGWKASAEQFGPRELVDHTVRAEQLGFDSVFISDHFQPWRHRAGHAPFAMSWLAAAGERTERVTLGTSVMTPTFRYNPAVVAQAFGTLGALNPGRIILGIGTGEALNEVAVGAAGSPWPEFKERFARLREAVTLMRRLWTEERVTFEGDYYRTHDATIYDRPAEPIPVYVAAGGPLVARYAGRSGDGFICTSGKGRELYADQLLPAVDEGLSRSSRTRDDIDRMIEIKLSYDRDPGAALHNVRFWAPLSLTAEQKHGVHDPVEMERLADELSDEQVAKRWIVTSDPGEAVEQIRQYVDLGFNHLVVHAPGDDQARFLDQFSADVLPGLRGL</sequence>
<protein>
    <recommendedName>
        <fullName evidence="1">F420-dependent glucose-6-phosphate dehydrogenase</fullName>
        <shortName evidence="1">FGD</shortName>
        <shortName evidence="1">G6PD</shortName>
        <ecNumber evidence="1">1.1.98.2</ecNumber>
    </recommendedName>
</protein>